<sequence>MGPIRIGVGGPVGAGKTQLVERITRALIDEVSMAAITNDIYTIEDAKILAANGVLPEERIVGIETGGCPHTAIREDTSMNDAAIKDLVERFPDLELIFVESGGDNLSATFSPELVDFSIYIIDVAQGEKIPRKAGQGMIKSDLFIINKTDLAPYVGANLDVMVEDAKTFRKNKPFCLTNLRTDDGLDKVLEWIRHEVMMQDLQEA</sequence>
<keyword id="KW-0143">Chaperone</keyword>
<keyword id="KW-0963">Cytoplasm</keyword>
<keyword id="KW-0342">GTP-binding</keyword>
<keyword id="KW-0996">Nickel insertion</keyword>
<keyword id="KW-0547">Nucleotide-binding</keyword>
<accession>A4QA26</accession>
<protein>
    <recommendedName>
        <fullName evidence="1">Urease accessory protein UreG</fullName>
    </recommendedName>
</protein>
<organism>
    <name type="scientific">Corynebacterium glutamicum (strain R)</name>
    <dbReference type="NCBI Taxonomy" id="340322"/>
    <lineage>
        <taxon>Bacteria</taxon>
        <taxon>Bacillati</taxon>
        <taxon>Actinomycetota</taxon>
        <taxon>Actinomycetes</taxon>
        <taxon>Mycobacteriales</taxon>
        <taxon>Corynebacteriaceae</taxon>
        <taxon>Corynebacterium</taxon>
    </lineage>
</organism>
<feature type="chain" id="PRO_1000145171" description="Urease accessory protein UreG">
    <location>
        <begin position="1"/>
        <end position="205"/>
    </location>
</feature>
<feature type="binding site" evidence="1">
    <location>
        <begin position="10"/>
        <end position="17"/>
    </location>
    <ligand>
        <name>GTP</name>
        <dbReference type="ChEBI" id="CHEBI:37565"/>
    </ligand>
</feature>
<gene>
    <name evidence="1" type="primary">ureG</name>
    <name type="ordered locus">cgR_0108</name>
</gene>
<reference key="1">
    <citation type="journal article" date="2007" name="Microbiology">
        <title>Comparative analysis of the Corynebacterium glutamicum group and complete genome sequence of strain R.</title>
        <authorList>
            <person name="Yukawa H."/>
            <person name="Omumasaba C.A."/>
            <person name="Nonaka H."/>
            <person name="Kos P."/>
            <person name="Okai N."/>
            <person name="Suzuki N."/>
            <person name="Suda M."/>
            <person name="Tsuge Y."/>
            <person name="Watanabe J."/>
            <person name="Ikeda Y."/>
            <person name="Vertes A.A."/>
            <person name="Inui M."/>
        </authorList>
    </citation>
    <scope>NUCLEOTIDE SEQUENCE [LARGE SCALE GENOMIC DNA]</scope>
    <source>
        <strain>R</strain>
    </source>
</reference>
<name>UREG_CORGB</name>
<dbReference type="EMBL" id="AP009044">
    <property type="protein sequence ID" value="BAF53069.1"/>
    <property type="molecule type" value="Genomic_DNA"/>
</dbReference>
<dbReference type="RefSeq" id="WP_003859932.1">
    <property type="nucleotide sequence ID" value="NC_009342.1"/>
</dbReference>
<dbReference type="SMR" id="A4QA26"/>
<dbReference type="KEGG" id="cgt:cgR_0108"/>
<dbReference type="HOGENOM" id="CLU_072144_1_0_11"/>
<dbReference type="PhylomeDB" id="A4QA26"/>
<dbReference type="Proteomes" id="UP000006698">
    <property type="component" value="Chromosome"/>
</dbReference>
<dbReference type="GO" id="GO:0005737">
    <property type="term" value="C:cytoplasm"/>
    <property type="evidence" value="ECO:0007669"/>
    <property type="project" value="UniProtKB-SubCell"/>
</dbReference>
<dbReference type="GO" id="GO:0005525">
    <property type="term" value="F:GTP binding"/>
    <property type="evidence" value="ECO:0007669"/>
    <property type="project" value="UniProtKB-KW"/>
</dbReference>
<dbReference type="GO" id="GO:0003924">
    <property type="term" value="F:GTPase activity"/>
    <property type="evidence" value="ECO:0007669"/>
    <property type="project" value="InterPro"/>
</dbReference>
<dbReference type="GO" id="GO:0016151">
    <property type="term" value="F:nickel cation binding"/>
    <property type="evidence" value="ECO:0007669"/>
    <property type="project" value="UniProtKB-UniRule"/>
</dbReference>
<dbReference type="GO" id="GO:0043419">
    <property type="term" value="P:urea catabolic process"/>
    <property type="evidence" value="ECO:0007669"/>
    <property type="project" value="InterPro"/>
</dbReference>
<dbReference type="CDD" id="cd05540">
    <property type="entry name" value="UreG"/>
    <property type="match status" value="1"/>
</dbReference>
<dbReference type="Gene3D" id="3.40.50.300">
    <property type="entry name" value="P-loop containing nucleotide triphosphate hydrolases"/>
    <property type="match status" value="1"/>
</dbReference>
<dbReference type="HAMAP" id="MF_01389">
    <property type="entry name" value="UreG"/>
    <property type="match status" value="1"/>
</dbReference>
<dbReference type="InterPro" id="IPR003495">
    <property type="entry name" value="CobW/HypB/UreG_nucleotide-bd"/>
</dbReference>
<dbReference type="InterPro" id="IPR027417">
    <property type="entry name" value="P-loop_NTPase"/>
</dbReference>
<dbReference type="InterPro" id="IPR004400">
    <property type="entry name" value="UreG"/>
</dbReference>
<dbReference type="NCBIfam" id="TIGR00101">
    <property type="entry name" value="ureG"/>
    <property type="match status" value="1"/>
</dbReference>
<dbReference type="PANTHER" id="PTHR31715">
    <property type="entry name" value="UREASE ACCESSORY PROTEIN G"/>
    <property type="match status" value="1"/>
</dbReference>
<dbReference type="PANTHER" id="PTHR31715:SF0">
    <property type="entry name" value="UREASE ACCESSORY PROTEIN G"/>
    <property type="match status" value="1"/>
</dbReference>
<dbReference type="Pfam" id="PF02492">
    <property type="entry name" value="cobW"/>
    <property type="match status" value="1"/>
</dbReference>
<dbReference type="PIRSF" id="PIRSF005624">
    <property type="entry name" value="Ni-bind_GTPase"/>
    <property type="match status" value="1"/>
</dbReference>
<dbReference type="SUPFAM" id="SSF52540">
    <property type="entry name" value="P-loop containing nucleoside triphosphate hydrolases"/>
    <property type="match status" value="1"/>
</dbReference>
<proteinExistence type="inferred from homology"/>
<comment type="function">
    <text evidence="1">Facilitates the functional incorporation of the urease nickel metallocenter. This process requires GTP hydrolysis, probably effectuated by UreG.</text>
</comment>
<comment type="subunit">
    <text evidence="1">Homodimer. UreD, UreF and UreG form a complex that acts as a GTP-hydrolysis-dependent molecular chaperone, activating the urease apoprotein by helping to assemble the nickel containing metallocenter of UreC. The UreE protein probably delivers the nickel.</text>
</comment>
<comment type="subcellular location">
    <subcellularLocation>
        <location evidence="1">Cytoplasm</location>
    </subcellularLocation>
</comment>
<comment type="similarity">
    <text evidence="1">Belongs to the SIMIBI class G3E GTPase family. UreG subfamily.</text>
</comment>
<evidence type="ECO:0000255" key="1">
    <source>
        <dbReference type="HAMAP-Rule" id="MF_01389"/>
    </source>
</evidence>